<protein>
    <recommendedName>
        <fullName>Cellulose biosynthesis protein BcsQ</fullName>
    </recommendedName>
</protein>
<dbReference type="PDB" id="6YAR">
    <property type="method" value="X-ray"/>
    <property type="resolution" value="1.90 A"/>
    <property type="chains" value="A/B=1-250"/>
</dbReference>
<dbReference type="PDB" id="6YAY">
    <property type="method" value="X-ray"/>
    <property type="resolution" value="2.09 A"/>
    <property type="chains" value="A/B=1-250"/>
</dbReference>
<dbReference type="PDB" id="6YB3">
    <property type="method" value="X-ray"/>
    <property type="resolution" value="1.59 A"/>
    <property type="chains" value="A/B=1-250"/>
</dbReference>
<dbReference type="PDB" id="6YB5">
    <property type="method" value="X-ray"/>
    <property type="resolution" value="1.59 A"/>
    <property type="chains" value="A/B/H=1-250"/>
</dbReference>
<dbReference type="PDB" id="6YBB">
    <property type="method" value="X-ray"/>
    <property type="resolution" value="2.90 A"/>
    <property type="chains" value="A/B=1-250"/>
</dbReference>
<dbReference type="PDB" id="6YBU">
    <property type="method" value="X-ray"/>
    <property type="resolution" value="2.49 A"/>
    <property type="chains" value="A/B/G/H=1-250"/>
</dbReference>
<dbReference type="PDB" id="9FNN">
    <property type="method" value="EM"/>
    <property type="resolution" value="2.85 A"/>
    <property type="chains" value="Q/W=1-250"/>
</dbReference>
<dbReference type="PDB" id="9FP0">
    <property type="method" value="EM"/>
    <property type="resolution" value="3.37 A"/>
    <property type="chains" value="Q/W=1-250"/>
</dbReference>
<dbReference type="PDB" id="9FP2">
    <property type="method" value="EM"/>
    <property type="resolution" value="3.76 A"/>
    <property type="chains" value="Q/W=1-250"/>
</dbReference>
<dbReference type="PDBsum" id="6YAR"/>
<dbReference type="PDBsum" id="6YAY"/>
<dbReference type="PDBsum" id="6YB3"/>
<dbReference type="PDBsum" id="6YB5"/>
<dbReference type="PDBsum" id="6YBB"/>
<dbReference type="PDBsum" id="6YBU"/>
<dbReference type="PDBsum" id="9FNN"/>
<dbReference type="PDBsum" id="9FP0"/>
<dbReference type="PDBsum" id="9FP2"/>
<dbReference type="SMR" id="P0DP92"/>
<dbReference type="GO" id="GO:0005737">
    <property type="term" value="C:cytoplasm"/>
    <property type="evidence" value="ECO:0007669"/>
    <property type="project" value="UniProtKB-SubCell"/>
</dbReference>
<dbReference type="GO" id="GO:0005524">
    <property type="term" value="F:ATP binding"/>
    <property type="evidence" value="ECO:0007669"/>
    <property type="project" value="UniProtKB-KW"/>
</dbReference>
<dbReference type="FunFam" id="3.40.50.300:FF:000943">
    <property type="entry name" value="Cellulose synthase operon protein YhjQ"/>
    <property type="match status" value="1"/>
</dbReference>
<dbReference type="Gene3D" id="3.40.50.300">
    <property type="entry name" value="P-loop containing nucleotide triphosphate hydrolases"/>
    <property type="match status" value="1"/>
</dbReference>
<dbReference type="InterPro" id="IPR017746">
    <property type="entry name" value="Cellulose_synthase_operon_BcsQ"/>
</dbReference>
<dbReference type="InterPro" id="IPR027417">
    <property type="entry name" value="P-loop_NTPase"/>
</dbReference>
<dbReference type="InterPro" id="IPR050625">
    <property type="entry name" value="ParA/MinD_ATPase"/>
</dbReference>
<dbReference type="NCBIfam" id="TIGR03371">
    <property type="entry name" value="cellulose_yhjQ"/>
    <property type="match status" value="1"/>
</dbReference>
<dbReference type="NCBIfam" id="NF007460">
    <property type="entry name" value="PRK10037.1"/>
    <property type="match status" value="1"/>
</dbReference>
<dbReference type="PANTHER" id="PTHR43384:SF4">
    <property type="entry name" value="CELLULOSE BIOSYNTHESIS PROTEIN BCSQ-RELATED"/>
    <property type="match status" value="1"/>
</dbReference>
<dbReference type="PANTHER" id="PTHR43384">
    <property type="entry name" value="SEPTUM SITE-DETERMINING PROTEIN MIND HOMOLOG, CHLOROPLASTIC-RELATED"/>
    <property type="match status" value="1"/>
</dbReference>
<dbReference type="Pfam" id="PF06564">
    <property type="entry name" value="CBP_BcsQ"/>
    <property type="match status" value="1"/>
</dbReference>
<dbReference type="SUPFAM" id="SSF52540">
    <property type="entry name" value="P-loop containing nucleoside triphosphate hydrolases"/>
    <property type="match status" value="1"/>
</dbReference>
<proteinExistence type="evidence at protein level"/>
<keyword id="KW-0002">3D-structure</keyword>
<keyword id="KW-0067">ATP-binding</keyword>
<keyword id="KW-0963">Cytoplasm</keyword>
<keyword id="KW-0547">Nucleotide-binding</keyword>
<reference key="1">
    <citation type="journal article" date="2009" name="Mol. Microbiol.">
        <title>BcsQ is an essential component of the Escherichia coli cellulose biosynthesis apparatus that localizes at the bacterial cell pole.</title>
        <authorList>
            <person name="Le Quere B."/>
            <person name="Ghigo J.M."/>
        </authorList>
    </citation>
    <scope>NUCLEOTIDE SEQUENCE [GENOMIC DNA]</scope>
    <scope>FUNCTION</scope>
    <scope>SUBCELLULAR LOCATION</scope>
    <scope>DOMAIN</scope>
    <scope>DISRUPTION PHENOTYPE</scope>
    <scope>GENE NAME</scope>
    <scope>MUTAGENESIS OF GLY-14; THR-15; 220-SER--SER-250 AND 237-LEU--SER-250</scope>
    <source>
        <strain>1094</strain>
    </source>
</reference>
<reference key="2">
    <citation type="journal article" date="2013" name="J. Bacteriol.">
        <title>Cellulose as an architectural element in spatially structured Escherichia coli biofilms.</title>
        <authorList>
            <person name="Serra D.O."/>
            <person name="Richter A.M."/>
            <person name="Hengge R."/>
        </authorList>
    </citation>
    <scope>FUNCTION</scope>
    <scope>INDUCTION</scope>
    <scope>DISRUPTION PHENOTYPE</scope>
    <scope>RESTORATION OF READING FRAME</scope>
    <source>
        <strain>K12 / W3110 / AR3110</strain>
    </source>
</reference>
<gene>
    <name evidence="4" type="primary">bcsQ</name>
    <name type="synonym">yhjQ</name>
</gene>
<comment type="function">
    <text evidence="2 3">Essential for cellulose biosynthesis, shown for strain 1094, a commensal, natural cellulose producer (PubMed:19400787). Also shown in strain W3110 which has a restored reading frame (TAG stop codon to TTG for amino acid 6, called strain AR3110), this protein (PubMed:24097954). May play a role in subcellular localization of an active cellulose biosynthesis apparatus at the bacterial cell pole (PubMed:19400787). The combination of cellulose and the curli fiber network confer cohesion, elasticity and tissue-like properties to colonies (PubMed:24097954).</text>
</comment>
<comment type="subcellular location">
    <subcellularLocation>
        <location evidence="2">Cytoplasm</location>
    </subcellularLocation>
    <text evidence="2">Localizes at the cell pole, this does not require any genes of the divergently expressed yhjRbcsQABZC and bcsEFG operons.</text>
</comment>
<comment type="induction">
    <text evidence="2 3">Part of the yhjR-bcsQABZC operon (PubMed:19400787, PubMed:24097954). Expressed at low levels in mid-log phase, expression increases as cells enter stationary phase, the increase in stationary phase is dependent on rpoS (PubMed:24097954). In K12 strains the premature stop codon in position 8 has polar effects on downstream genes, decreasing their expression about 10-fold (PubMed:24097954).</text>
</comment>
<comment type="domain">
    <text evidence="2">The N-terminal putative ATP-binding domain is required for function. The C-terminal region contributes to both localization and function in cellulose synthesis.</text>
</comment>
<comment type="disruption phenotype">
    <text evidence="2 3">Deletion abolishes cellulose production.</text>
</comment>
<comment type="miscellaneous">
    <text evidence="3">Cellulose production is abolished in E.coli K12 / MG1655 and W3110 due to a premature stop codon in bcsQ. The C-terminal pseudogene prediction is found here (AC P37655) (PubMed:24097954).</text>
</comment>
<comment type="similarity">
    <text evidence="5">Belongs to the BcsQ family.</text>
</comment>
<accession>P0DP92</accession>
<name>BCSQ_ECOLI</name>
<feature type="chain" id="PRO_0000441757" description="Cellulose biosynthesis protein BcsQ">
    <location>
        <begin position="1"/>
        <end position="250"/>
    </location>
</feature>
<feature type="binding site" evidence="1">
    <location>
        <begin position="9"/>
        <end position="16"/>
    </location>
    <ligand>
        <name>ATP</name>
        <dbReference type="ChEBI" id="CHEBI:30616"/>
    </ligand>
</feature>
<feature type="sequence variant" description="In strain: 1094.">
    <original>A</original>
    <variation>K</variation>
    <location>
        <position position="249"/>
    </location>
</feature>
<feature type="mutagenesis site" description="Loss of cellulose production, still localizes to the cell pole." evidence="2">
    <original>G</original>
    <variation>S</variation>
    <location>
        <position position="14"/>
    </location>
</feature>
<feature type="mutagenesis site" description="Does not alter cellulose production." evidence="2">
    <original>T</original>
    <variation>Q</variation>
    <location>
        <position position="15"/>
    </location>
</feature>
<feature type="mutagenesis site" description="No cellulose production, 23% of protein localizes to the cell pole." evidence="2">
    <location>
        <begin position="220"/>
        <end position="250"/>
    </location>
</feature>
<feature type="mutagenesis site" description="Produces cellulose, 44% of protein localizes to the cell pole." evidence="2">
    <location>
        <begin position="237"/>
        <end position="250"/>
    </location>
</feature>
<feature type="strand" evidence="6">
    <location>
        <begin position="3"/>
        <end position="10"/>
    </location>
</feature>
<feature type="helix" evidence="6">
    <location>
        <begin position="15"/>
        <end position="28"/>
    </location>
</feature>
<feature type="strand" evidence="6">
    <location>
        <begin position="33"/>
        <end position="37"/>
    </location>
</feature>
<feature type="helix" evidence="6">
    <location>
        <begin position="44"/>
        <end position="48"/>
    </location>
</feature>
<feature type="helix" evidence="6">
    <location>
        <begin position="58"/>
        <end position="63"/>
    </location>
</feature>
<feature type="helix" evidence="6">
    <location>
        <begin position="68"/>
        <end position="71"/>
    </location>
</feature>
<feature type="strand" evidence="6">
    <location>
        <begin position="73"/>
        <end position="76"/>
    </location>
</feature>
<feature type="strand" evidence="6">
    <location>
        <begin position="79"/>
        <end position="82"/>
    </location>
</feature>
<feature type="helix" evidence="6">
    <location>
        <begin position="89"/>
        <end position="92"/>
    </location>
</feature>
<feature type="helix" evidence="6">
    <location>
        <begin position="95"/>
        <end position="98"/>
    </location>
</feature>
<feature type="helix" evidence="6">
    <location>
        <begin position="104"/>
        <end position="114"/>
    </location>
</feature>
<feature type="strand" evidence="6">
    <location>
        <begin position="119"/>
        <end position="125"/>
    </location>
</feature>
<feature type="helix" evidence="6">
    <location>
        <begin position="131"/>
        <end position="139"/>
    </location>
</feature>
<feature type="strand" evidence="6">
    <location>
        <begin position="141"/>
        <end position="150"/>
    </location>
</feature>
<feature type="helix" evidence="6">
    <location>
        <begin position="151"/>
        <end position="156"/>
    </location>
</feature>
<feature type="turn" evidence="6">
    <location>
        <begin position="157"/>
        <end position="159"/>
    </location>
</feature>
<feature type="strand" evidence="6">
    <location>
        <begin position="167"/>
        <end position="173"/>
    </location>
</feature>
<feature type="helix" evidence="6">
    <location>
        <begin position="178"/>
        <end position="190"/>
    </location>
</feature>
<feature type="strand" evidence="7">
    <location>
        <begin position="194"/>
        <end position="200"/>
    </location>
</feature>
<feature type="helix" evidence="6">
    <location>
        <begin position="203"/>
        <end position="210"/>
    </location>
</feature>
<feature type="helix" evidence="6">
    <location>
        <begin position="215"/>
        <end position="218"/>
    </location>
</feature>
<feature type="helix" evidence="6">
    <location>
        <begin position="223"/>
        <end position="238"/>
    </location>
</feature>
<sequence length="250" mass="27878">MAVLGLQGVRGGVGTTTITAALAWSLQMLGENVLVVDACPDNLLRLSFNVDFTHRQGWARAMLDGQDWRDAGLRYTSQLDLLPFGQLSIEEQENPQHWQTRLSDICSGLQQLKASGRYQWILIDLPRDASQITHQLLSLCDHSLAIVNVDANCHIRLHQQALPDGAHILINDFRIGSQVQDDIYQLWLQSQRRLLPMLIHRDEAMAECLAAKQPVGEYRSDALAAEEILTLANWCLLNYSGLKTPVGSAS</sequence>
<evidence type="ECO:0000255" key="1"/>
<evidence type="ECO:0000269" key="2">
    <source>
    </source>
</evidence>
<evidence type="ECO:0000269" key="3">
    <source>
    </source>
</evidence>
<evidence type="ECO:0000303" key="4">
    <source>
    </source>
</evidence>
<evidence type="ECO:0000305" key="5"/>
<evidence type="ECO:0007829" key="6">
    <source>
        <dbReference type="PDB" id="6YB3"/>
    </source>
</evidence>
<evidence type="ECO:0007829" key="7">
    <source>
        <dbReference type="PDB" id="6YBU"/>
    </source>
</evidence>
<organism>
    <name type="scientific">Escherichia coli (strain K12)</name>
    <dbReference type="NCBI Taxonomy" id="83333"/>
    <lineage>
        <taxon>Bacteria</taxon>
        <taxon>Pseudomonadati</taxon>
        <taxon>Pseudomonadota</taxon>
        <taxon>Gammaproteobacteria</taxon>
        <taxon>Enterobacterales</taxon>
        <taxon>Enterobacteriaceae</taxon>
        <taxon>Escherichia</taxon>
    </lineage>
</organism>